<dbReference type="EC" id="2.7.11.1" evidence="9"/>
<dbReference type="EMBL" id="U01840">
    <property type="protein sequence ID" value="AAA99535.1"/>
    <property type="molecule type" value="mRNA"/>
</dbReference>
<dbReference type="EMBL" id="CH466521">
    <property type="protein sequence ID" value="EDK97490.1"/>
    <property type="molecule type" value="Genomic_DNA"/>
</dbReference>
<dbReference type="EMBL" id="BC050772">
    <property type="protein sequence ID" value="AAH50772.2"/>
    <property type="molecule type" value="mRNA"/>
</dbReference>
<dbReference type="CCDS" id="CCDS28011.1"/>
<dbReference type="RefSeq" id="NP_033461.2">
    <property type="nucleotide sequence ID" value="NM_009435.2"/>
</dbReference>
<dbReference type="SMR" id="Q61241"/>
<dbReference type="FunCoup" id="Q61241">
    <property type="interactions" value="213"/>
</dbReference>
<dbReference type="STRING" id="10090.ENSMUSP00000040302"/>
<dbReference type="BindingDB" id="Q61241"/>
<dbReference type="ChEMBL" id="CHEMBL3804750"/>
<dbReference type="iPTMnet" id="Q61241"/>
<dbReference type="PhosphoSitePlus" id="Q61241"/>
<dbReference type="SwissPalm" id="Q61241"/>
<dbReference type="REPRODUCTION-2DPAGE" id="IPI00403935"/>
<dbReference type="PaxDb" id="10090-ENSMUSP00000040302"/>
<dbReference type="ProteomicsDB" id="300142"/>
<dbReference type="Antibodypedia" id="25396">
    <property type="antibodies" value="50 antibodies from 18 providers"/>
</dbReference>
<dbReference type="DNASU" id="22114"/>
<dbReference type="Ensembl" id="ENSMUST00000046937.4">
    <property type="protein sequence ID" value="ENSMUSP00000040302.3"/>
    <property type="gene ID" value="ENSMUSG00000041566.4"/>
</dbReference>
<dbReference type="GeneID" id="22114"/>
<dbReference type="KEGG" id="mmu:22114"/>
<dbReference type="UCSC" id="uc007ymk.1">
    <property type="organism name" value="mouse"/>
</dbReference>
<dbReference type="AGR" id="MGI:1347557"/>
<dbReference type="CTD" id="22114"/>
<dbReference type="MGI" id="MGI:1347557">
    <property type="gene designation" value="Tssk1"/>
</dbReference>
<dbReference type="VEuPathDB" id="HostDB:ENSMUSG00000041566"/>
<dbReference type="eggNOG" id="KOG0583">
    <property type="taxonomic scope" value="Eukaryota"/>
</dbReference>
<dbReference type="GeneTree" id="ENSGT00940000163130"/>
<dbReference type="HOGENOM" id="CLU_000288_63_0_1"/>
<dbReference type="InParanoid" id="Q61241"/>
<dbReference type="OMA" id="MLNASMP"/>
<dbReference type="OrthoDB" id="541276at2759"/>
<dbReference type="PhylomeDB" id="Q61241"/>
<dbReference type="TreeFam" id="TF352374"/>
<dbReference type="BioGRID-ORCS" id="22114">
    <property type="hits" value="0 hits in 79 CRISPR screens"/>
</dbReference>
<dbReference type="PRO" id="PR:Q61241"/>
<dbReference type="Proteomes" id="UP000000589">
    <property type="component" value="Chromosome 16"/>
</dbReference>
<dbReference type="RNAct" id="Q61241">
    <property type="molecule type" value="protein"/>
</dbReference>
<dbReference type="Bgee" id="ENSMUSG00000041566">
    <property type="expression patterns" value="Expressed in seminiferous tubule of testis and 10 other cell types or tissues"/>
</dbReference>
<dbReference type="GO" id="GO:0001669">
    <property type="term" value="C:acrosomal vesicle"/>
    <property type="evidence" value="ECO:0000304"/>
    <property type="project" value="UniProtKB"/>
</dbReference>
<dbReference type="GO" id="GO:0031514">
    <property type="term" value="C:motile cilium"/>
    <property type="evidence" value="ECO:0000314"/>
    <property type="project" value="UniProtKB"/>
</dbReference>
<dbReference type="GO" id="GO:0005524">
    <property type="term" value="F:ATP binding"/>
    <property type="evidence" value="ECO:0000250"/>
    <property type="project" value="UniProtKB"/>
</dbReference>
<dbReference type="GO" id="GO:0000287">
    <property type="term" value="F:magnesium ion binding"/>
    <property type="evidence" value="ECO:0000314"/>
    <property type="project" value="UniProtKB"/>
</dbReference>
<dbReference type="GO" id="GO:0106310">
    <property type="term" value="F:protein serine kinase activity"/>
    <property type="evidence" value="ECO:0007669"/>
    <property type="project" value="RHEA"/>
</dbReference>
<dbReference type="GO" id="GO:0004674">
    <property type="term" value="F:protein serine/threonine kinase activity"/>
    <property type="evidence" value="ECO:0000314"/>
    <property type="project" value="UniProtKB"/>
</dbReference>
<dbReference type="GO" id="GO:0044877">
    <property type="term" value="F:protein-containing complex binding"/>
    <property type="evidence" value="ECO:0000353"/>
    <property type="project" value="UniProtKB"/>
</dbReference>
<dbReference type="GO" id="GO:0018105">
    <property type="term" value="P:peptidyl-serine phosphorylation"/>
    <property type="evidence" value="ECO:0000314"/>
    <property type="project" value="UniProtKB"/>
</dbReference>
<dbReference type="GO" id="GO:0006468">
    <property type="term" value="P:protein phosphorylation"/>
    <property type="evidence" value="ECO:0000250"/>
    <property type="project" value="UniProtKB"/>
</dbReference>
<dbReference type="GO" id="GO:0007286">
    <property type="term" value="P:spermatid development"/>
    <property type="evidence" value="ECO:0000315"/>
    <property type="project" value="UniProtKB"/>
</dbReference>
<dbReference type="GO" id="GO:0007283">
    <property type="term" value="P:spermatogenesis"/>
    <property type="evidence" value="ECO:0000304"/>
    <property type="project" value="UniProtKB"/>
</dbReference>
<dbReference type="CDD" id="cd14165">
    <property type="entry name" value="STKc_TSSK1_2-like"/>
    <property type="match status" value="1"/>
</dbReference>
<dbReference type="FunFam" id="1.10.510.10:FF:000443">
    <property type="entry name" value="Testis-specific serine/threonine-protein kinase 2"/>
    <property type="match status" value="1"/>
</dbReference>
<dbReference type="Gene3D" id="1.10.510.10">
    <property type="entry name" value="Transferase(Phosphotransferase) domain 1"/>
    <property type="match status" value="1"/>
</dbReference>
<dbReference type="InterPro" id="IPR011009">
    <property type="entry name" value="Kinase-like_dom_sf"/>
</dbReference>
<dbReference type="InterPro" id="IPR000719">
    <property type="entry name" value="Prot_kinase_dom"/>
</dbReference>
<dbReference type="InterPro" id="IPR017441">
    <property type="entry name" value="Protein_kinase_ATP_BS"/>
</dbReference>
<dbReference type="InterPro" id="IPR008271">
    <property type="entry name" value="Ser/Thr_kinase_AS"/>
</dbReference>
<dbReference type="PANTHER" id="PTHR24346">
    <property type="entry name" value="MAP/MICROTUBULE AFFINITY-REGULATING KINASE"/>
    <property type="match status" value="1"/>
</dbReference>
<dbReference type="PANTHER" id="PTHR24346:SF102">
    <property type="entry name" value="TESTIS-SPECIFIC SERINE_THREONINE-PROTEIN KINASE 1"/>
    <property type="match status" value="1"/>
</dbReference>
<dbReference type="Pfam" id="PF00069">
    <property type="entry name" value="Pkinase"/>
    <property type="match status" value="1"/>
</dbReference>
<dbReference type="SMART" id="SM00220">
    <property type="entry name" value="S_TKc"/>
    <property type="match status" value="1"/>
</dbReference>
<dbReference type="SUPFAM" id="SSF56112">
    <property type="entry name" value="Protein kinase-like (PK-like)"/>
    <property type="match status" value="1"/>
</dbReference>
<dbReference type="PROSITE" id="PS00107">
    <property type="entry name" value="PROTEIN_KINASE_ATP"/>
    <property type="match status" value="1"/>
</dbReference>
<dbReference type="PROSITE" id="PS50011">
    <property type="entry name" value="PROTEIN_KINASE_DOM"/>
    <property type="match status" value="1"/>
</dbReference>
<dbReference type="PROSITE" id="PS00108">
    <property type="entry name" value="PROTEIN_KINASE_ST"/>
    <property type="match status" value="1"/>
</dbReference>
<sequence length="365" mass="41589">MDDAAVLKRRGYIMGINLGEGSYAKVKSAYSERLKFNVAVKIIDRKKAPSDFLEKFLPREIEILAMLNHRSIVKTYEIFETSDGKVYIVMELGVQGDLLEFIKTRGALQEDDARKKFHQLSSAIKYCHDLDVVHRDLKCENLLLDKDFNIKLSDFGFSKRCLRDDSGRLILSKTFCGSAAYAAPEVLQGIPYQPKVYDIWSLGVILYIMVCGSMPYDDSNIKKMLRIQKEHRVNFPRSKHLTGECKDLIYRMLQPDVNRRLHIDEILNHCWVQPKARGLSSGAINKEGESSRATEPSWIPEPGADKKSATKLEPREEARSEARSESKPQEDTLQVVRQSENVGLSSELNRDTEEGHPQQPSETHT</sequence>
<evidence type="ECO:0000250" key="1">
    <source>
        <dbReference type="UniProtKB" id="Q9BXA7"/>
    </source>
</evidence>
<evidence type="ECO:0000255" key="2">
    <source>
        <dbReference type="PROSITE-ProRule" id="PRU00159"/>
    </source>
</evidence>
<evidence type="ECO:0000255" key="3">
    <source>
        <dbReference type="PROSITE-ProRule" id="PRU10027"/>
    </source>
</evidence>
<evidence type="ECO:0000256" key="4">
    <source>
        <dbReference type="SAM" id="MobiDB-lite"/>
    </source>
</evidence>
<evidence type="ECO:0000269" key="5">
    <source>
    </source>
</evidence>
<evidence type="ECO:0000269" key="6">
    <source>
    </source>
</evidence>
<evidence type="ECO:0000269" key="7">
    <source>
    </source>
</evidence>
<evidence type="ECO:0000269" key="8">
    <source>
    </source>
</evidence>
<evidence type="ECO:0000269" key="9">
    <source>
    </source>
</evidence>
<evidence type="ECO:0000269" key="10">
    <source>
    </source>
</evidence>
<evidence type="ECO:0000269" key="11">
    <source>
    </source>
</evidence>
<evidence type="ECO:0000305" key="12"/>
<evidence type="ECO:0000305" key="13">
    <source>
    </source>
</evidence>
<organism>
    <name type="scientific">Mus musculus</name>
    <name type="common">Mouse</name>
    <dbReference type="NCBI Taxonomy" id="10090"/>
    <lineage>
        <taxon>Eukaryota</taxon>
        <taxon>Metazoa</taxon>
        <taxon>Chordata</taxon>
        <taxon>Craniata</taxon>
        <taxon>Vertebrata</taxon>
        <taxon>Euteleostomi</taxon>
        <taxon>Mammalia</taxon>
        <taxon>Eutheria</taxon>
        <taxon>Euarchontoglires</taxon>
        <taxon>Glires</taxon>
        <taxon>Rodentia</taxon>
        <taxon>Myomorpha</taxon>
        <taxon>Muroidea</taxon>
        <taxon>Muridae</taxon>
        <taxon>Murinae</taxon>
        <taxon>Mus</taxon>
        <taxon>Mus</taxon>
    </lineage>
</organism>
<protein>
    <recommendedName>
        <fullName>Testis-specific serine/threonine-protein kinase 1</fullName>
        <shortName>TSK-1</shortName>
        <shortName>TSK1</shortName>
        <shortName>TSSK-1</shortName>
        <shortName>Testis-specific kinase 1</shortName>
        <ecNumber evidence="9">2.7.11.1</ecNumber>
    </recommendedName>
    <alternativeName>
        <fullName>Serine/threonine-protein kinase 22A</fullName>
    </alternativeName>
</protein>
<reference key="1">
    <citation type="journal article" date="1994" name="Gene">
        <title>Characterization of a novel murine testis-specific serine/threonine kinase.</title>
        <authorList>
            <person name="Bielke W."/>
            <person name="Blaschke R.J."/>
            <person name="Miescher G.C."/>
            <person name="Zurcher G."/>
            <person name="Andres A.-C."/>
            <person name="Ziemiecki A."/>
        </authorList>
    </citation>
    <scope>NUCLEOTIDE SEQUENCE [MRNA]</scope>
    <source>
        <tissue>Testis</tissue>
    </source>
</reference>
<reference key="2">
    <citation type="submission" date="2005-07" db="EMBL/GenBank/DDBJ databases">
        <authorList>
            <person name="Mural R.J."/>
            <person name="Adams M.D."/>
            <person name="Myers E.W."/>
            <person name="Smith H.O."/>
            <person name="Venter J.C."/>
        </authorList>
    </citation>
    <scope>NUCLEOTIDE SEQUENCE [LARGE SCALE GENOMIC DNA]</scope>
</reference>
<reference key="3">
    <citation type="journal article" date="2004" name="Genome Res.">
        <title>The status, quality, and expansion of the NIH full-length cDNA project: the Mammalian Gene Collection (MGC).</title>
        <authorList>
            <consortium name="The MGC Project Team"/>
        </authorList>
    </citation>
    <scope>NUCLEOTIDE SEQUENCE [LARGE SCALE MRNA]</scope>
    <source>
        <tissue>Testis</tissue>
    </source>
</reference>
<reference key="4">
    <citation type="journal article" date="1998" name="Mech. Dev.">
        <title>Immunohistochemical analysis of the expression of two serine-threonine kinases in the maturing mouse testis.</title>
        <authorList>
            <person name="Nayak S."/>
            <person name="Galili N."/>
            <person name="Buck C.A."/>
        </authorList>
    </citation>
    <scope>SUBCELLULAR LOCATION</scope>
    <scope>TISSUE SPECIFICITY</scope>
</reference>
<reference key="5">
    <citation type="journal article" date="1997" name="J. Cell Biol.">
        <title>A novel family of serine/threonine kinases participating in spermiogenesis.</title>
        <authorList>
            <person name="Kueng P."/>
            <person name="Nikolova Z."/>
            <person name="Djonov V."/>
            <person name="Hemphill A."/>
            <person name="Rohrbach V."/>
            <person name="Boehlen D."/>
            <person name="Zuercher G."/>
            <person name="Andres A.-C."/>
            <person name="Ziemiecki A."/>
        </authorList>
    </citation>
    <scope>SUBCELLULAR LOCATION</scope>
    <scope>TISSUE SPECIFICITY</scope>
</reference>
<reference key="6">
    <citation type="journal article" date="2000" name="Mech. Dev.">
        <title>A novel member of the testis specific serine kinase family, tssk-3, expressed in the Leydig cells of sexually mature mice.</title>
        <authorList>
            <person name="Zuercher G."/>
            <person name="Rohrbach V."/>
            <person name="Andres A.-C."/>
            <person name="Ziemiecki A."/>
        </authorList>
    </citation>
    <scope>INTERACTION WITH TSSK2</scope>
</reference>
<reference key="7">
    <citation type="journal article" date="2008" name="Dev. Biol.">
        <title>Targeted deletion of Tssk1 and 2 causes male infertility due to haploinsufficiency.</title>
        <authorList>
            <person name="Xu B."/>
            <person name="Hao Z."/>
            <person name="Jha K.N."/>
            <person name="Zhang Z."/>
            <person name="Urekar C."/>
            <person name="Digilio L."/>
            <person name="Pulido S."/>
            <person name="Strauss J.F. III"/>
            <person name="Flickinger C.J."/>
            <person name="Herr J.C."/>
        </authorList>
    </citation>
    <scope>DISRUPTION PHENOTYPE</scope>
</reference>
<reference key="8">
    <citation type="journal article" date="2010" name="J. Cell Sci.">
        <title>Functional transformation of the chromatoid body in mouse spermatids requires testis-specific serine/threonine kinases.</title>
        <authorList>
            <person name="Shang P."/>
            <person name="Baarends W.M."/>
            <person name="Hoogerbrugge J."/>
            <person name="Ooms M.P."/>
            <person name="van Cappellen W.A."/>
            <person name="de Jong A.A."/>
            <person name="Dohle G.R."/>
            <person name="van Eenennaam H."/>
            <person name="Gossen J.A."/>
            <person name="Grootegoed J.A."/>
        </authorList>
    </citation>
    <scope>DISRUPTION PHENOTYPE</scope>
    <scope>SUBCELLULAR LOCATION</scope>
    <scope>FUNCTION</scope>
</reference>
<reference key="9">
    <citation type="journal article" date="2011" name="Mol. Hum. Reprod.">
        <title>Expression and localization of five members of the testis-specific serine kinase (Tssk) family in mouse and human sperm and testis.</title>
        <authorList>
            <person name="Li Y."/>
            <person name="Sosnik J."/>
            <person name="Brassard L."/>
            <person name="Reese M."/>
            <person name="Spiridonov N.A."/>
            <person name="Bates T.C."/>
            <person name="Johnson G.R."/>
            <person name="Anguita J."/>
            <person name="Visconti P.E."/>
            <person name="Salicioni A.M."/>
        </authorList>
    </citation>
    <scope>SUBCELLULAR LOCATION</scope>
    <scope>TISSUE SPECIFICITY</scope>
</reference>
<reference evidence="12" key="10">
    <citation type="journal article" date="2013" name="J. Biol. Chem.">
        <title>Heat shock protein 90 functions to stabilize and activate the testis-specific serine/threonine kinases, a family of kinases essential for male fertility.</title>
        <authorList>
            <person name="Jha K.N."/>
            <person name="Coleman A.R."/>
            <person name="Wong L."/>
            <person name="Salicioni A.M."/>
            <person name="Howcroft E."/>
            <person name="Johnson G.R."/>
        </authorList>
    </citation>
    <scope>FUNCTION</scope>
    <scope>CATALYTIC ACTIVITY</scope>
    <scope>COFACTOR</scope>
    <scope>INTERACTION WITH HSP90</scope>
    <scope>UBIQUITINATION</scope>
</reference>
<accession>Q61241</accession>
<accession>Q80YU1</accession>
<name>TSSK1_MOUSE</name>
<keyword id="KW-0067">ATP-binding</keyword>
<keyword id="KW-0966">Cell projection</keyword>
<keyword id="KW-0969">Cilium</keyword>
<keyword id="KW-0963">Cytoplasm</keyword>
<keyword id="KW-0968">Cytoplasmic vesicle</keyword>
<keyword id="KW-0217">Developmental protein</keyword>
<keyword id="KW-0221">Differentiation</keyword>
<keyword id="KW-0282">Flagellum</keyword>
<keyword id="KW-0418">Kinase</keyword>
<keyword id="KW-0460">Magnesium</keyword>
<keyword id="KW-0479">Metal-binding</keyword>
<keyword id="KW-0547">Nucleotide-binding</keyword>
<keyword id="KW-0597">Phosphoprotein</keyword>
<keyword id="KW-1185">Reference proteome</keyword>
<keyword id="KW-0723">Serine/threonine-protein kinase</keyword>
<keyword id="KW-0744">Spermatogenesis</keyword>
<keyword id="KW-0808">Transferase</keyword>
<keyword id="KW-0832">Ubl conjugation</keyword>
<feature type="chain" id="PRO_0000086767" description="Testis-specific serine/threonine-protein kinase 1">
    <location>
        <begin position="1"/>
        <end position="365"/>
    </location>
</feature>
<feature type="domain" description="Protein kinase" evidence="2">
    <location>
        <begin position="12"/>
        <end position="272"/>
    </location>
</feature>
<feature type="region of interest" description="Disordered" evidence="4">
    <location>
        <begin position="282"/>
        <end position="365"/>
    </location>
</feature>
<feature type="compositionally biased region" description="Basic and acidic residues" evidence="4">
    <location>
        <begin position="303"/>
        <end position="330"/>
    </location>
</feature>
<feature type="compositionally biased region" description="Polar residues" evidence="4">
    <location>
        <begin position="331"/>
        <end position="347"/>
    </location>
</feature>
<feature type="active site" description="Proton acceptor" evidence="2 3">
    <location>
        <position position="136"/>
    </location>
</feature>
<feature type="binding site" evidence="2">
    <location>
        <begin position="18"/>
        <end position="26"/>
    </location>
    <ligand>
        <name>ATP</name>
        <dbReference type="ChEBI" id="CHEBI:30616"/>
    </ligand>
</feature>
<feature type="binding site" evidence="2">
    <location>
        <position position="41"/>
    </location>
    <ligand>
        <name>ATP</name>
        <dbReference type="ChEBI" id="CHEBI:30616"/>
    </ligand>
</feature>
<feature type="modified residue" description="Phosphothreonine" evidence="1">
    <location>
        <position position="174"/>
    </location>
</feature>
<feature type="sequence conflict" description="In Ref. 1; AAA99535." evidence="12" ref="1">
    <original>E</original>
    <variation>A</variation>
    <location>
        <position position="80"/>
    </location>
</feature>
<feature type="sequence conflict" description="In Ref. 1; AAA99535." evidence="12" ref="1">
    <original>C</original>
    <variation>S</variation>
    <location>
        <position position="139"/>
    </location>
</feature>
<feature type="sequence conflict" description="In Ref. 1; AAA99535." evidence="12" ref="1">
    <location>
        <position position="224"/>
    </location>
</feature>
<gene>
    <name type="primary">Tssk1b</name>
    <name type="synonym">Stk22a</name>
    <name type="synonym">Tssk1</name>
</gene>
<comment type="function">
    <text evidence="7 9">Testis-specific serine/threonine-protein kinase required during spermatid development (PubMed:20053632, PubMed:23599433). Phosphorylates 'Ser-281' of TSKS (PubMed:20053632). Involved in the late stages of spermatogenesis, during the reconstruction of the cytoplasm (PubMed:20053632). During spermatogenesis, required for the transformation of a ring-shaped structure around the base of the flagellum originating from the chromatoid body (PubMed:20053632).</text>
</comment>
<comment type="catalytic activity">
    <reaction evidence="9">
        <text>L-seryl-[protein] + ATP = O-phospho-L-seryl-[protein] + ADP + H(+)</text>
        <dbReference type="Rhea" id="RHEA:17989"/>
        <dbReference type="Rhea" id="RHEA-COMP:9863"/>
        <dbReference type="Rhea" id="RHEA-COMP:11604"/>
        <dbReference type="ChEBI" id="CHEBI:15378"/>
        <dbReference type="ChEBI" id="CHEBI:29999"/>
        <dbReference type="ChEBI" id="CHEBI:30616"/>
        <dbReference type="ChEBI" id="CHEBI:83421"/>
        <dbReference type="ChEBI" id="CHEBI:456216"/>
        <dbReference type="EC" id="2.7.11.1"/>
    </reaction>
</comment>
<comment type="catalytic activity">
    <reaction evidence="9">
        <text>L-threonyl-[protein] + ATP = O-phospho-L-threonyl-[protein] + ADP + H(+)</text>
        <dbReference type="Rhea" id="RHEA:46608"/>
        <dbReference type="Rhea" id="RHEA-COMP:11060"/>
        <dbReference type="Rhea" id="RHEA-COMP:11605"/>
        <dbReference type="ChEBI" id="CHEBI:15378"/>
        <dbReference type="ChEBI" id="CHEBI:30013"/>
        <dbReference type="ChEBI" id="CHEBI:30616"/>
        <dbReference type="ChEBI" id="CHEBI:61977"/>
        <dbReference type="ChEBI" id="CHEBI:456216"/>
        <dbReference type="EC" id="2.7.11.1"/>
    </reaction>
</comment>
<comment type="cofactor">
    <cofactor evidence="9">
        <name>Mg(2+)</name>
        <dbReference type="ChEBI" id="CHEBI:18420"/>
    </cofactor>
    <text evidence="13">Mg(2+) and Mn(2+) were both present in the kinase buffer but Mg(2+) is likely to be the in vivo cofactor.</text>
</comment>
<comment type="activity regulation">
    <text evidence="1">Activated by phosphorylation on Thr-174, potentially by autophosphorylation.</text>
</comment>
<comment type="subunit">
    <text evidence="5 9">Interacts with TSSK2 (PubMed:10781952). Interacts with HSP90; this interaction stabilizes TSSK1 (PubMed:23599433).</text>
</comment>
<comment type="subcellular location">
    <subcellularLocation>
        <location>Cytoplasm</location>
    </subcellularLocation>
    <subcellularLocation>
        <location>Cytoplasmic vesicle</location>
        <location>Secretory vesicle</location>
        <location>Acrosome</location>
    </subcellularLocation>
    <subcellularLocation>
        <location>Cell projection</location>
        <location>Cilium</location>
        <location>Flagellum</location>
    </subcellularLocation>
    <text>In spermatozoa, present in the sperm head and in the flagellum.</text>
</comment>
<comment type="tissue specificity">
    <text evidence="8 10 11">Testis-specific. Expressed only in postmeiotic spermatids at the final stages of cytodifferentiation in the seminiferous tubules (at protein level). Not detected in released sperms in the lumen of the seminiferous tubules and the epididymis.</text>
</comment>
<comment type="PTM">
    <text evidence="1">Autophosphorylated.</text>
</comment>
<comment type="PTM">
    <text evidence="9">Ubiquitinated; HSP90 activity negatively regulates ubiquitination and degradation.</text>
</comment>
<comment type="disruption phenotype">
    <text evidence="6 7">Male mice lacking Tssk1b and Tssk2 are sterile due to haploinsufficiency. chimeras show failure to form elongated spermatids, apoptosis of spermatocytes and spermatids, and the appearance of numerous round cells in the epididymal lumen. Elongating spermatids possess a collapsed mitochondrial sheath.</text>
</comment>
<comment type="similarity">
    <text evidence="12">Belongs to the protein kinase superfamily. CAMK Ser/Thr protein kinase family.</text>
</comment>
<proteinExistence type="evidence at protein level"/>